<accession>Q9HH99</accession>
<comment type="function">
    <text evidence="3">Catalyzes the reduction of 1-pyrroline-5-carboxylate (PCA) to L-proline.</text>
</comment>
<comment type="catalytic activity">
    <reaction evidence="1">
        <text>L-proline + NADP(+) = (S)-1-pyrroline-5-carboxylate + NADPH + 2 H(+)</text>
        <dbReference type="Rhea" id="RHEA:14109"/>
        <dbReference type="ChEBI" id="CHEBI:15378"/>
        <dbReference type="ChEBI" id="CHEBI:17388"/>
        <dbReference type="ChEBI" id="CHEBI:57783"/>
        <dbReference type="ChEBI" id="CHEBI:58349"/>
        <dbReference type="ChEBI" id="CHEBI:60039"/>
        <dbReference type="EC" id="1.5.1.2"/>
    </reaction>
</comment>
<comment type="catalytic activity">
    <reaction evidence="1">
        <text>L-proline + NAD(+) = (S)-1-pyrroline-5-carboxylate + NADH + 2 H(+)</text>
        <dbReference type="Rhea" id="RHEA:14105"/>
        <dbReference type="ChEBI" id="CHEBI:15378"/>
        <dbReference type="ChEBI" id="CHEBI:17388"/>
        <dbReference type="ChEBI" id="CHEBI:57540"/>
        <dbReference type="ChEBI" id="CHEBI:57945"/>
        <dbReference type="ChEBI" id="CHEBI:60039"/>
        <dbReference type="EC" id="1.5.1.2"/>
    </reaction>
</comment>
<comment type="pathway">
    <text evidence="1 2">Amino-acid biosynthesis; L-proline biosynthesis; L-proline from L-glutamate 5-semialdehyde: step 1/1.</text>
</comment>
<comment type="subcellular location">
    <subcellularLocation>
        <location evidence="1">Cytoplasm</location>
    </subcellularLocation>
</comment>
<comment type="disruption phenotype">
    <text evidence="2">Mutants are auxotrophic for proline.</text>
</comment>
<comment type="similarity">
    <text evidence="1">Belongs to the pyrroline-5-carboxylate reductase family.</text>
</comment>
<protein>
    <recommendedName>
        <fullName evidence="1">Pyrroline-5-carboxylate reductase</fullName>
        <shortName evidence="1">P5C reductase</shortName>
        <shortName evidence="1">P5CR</shortName>
        <ecNumber evidence="1">1.5.1.2</ecNumber>
    </recommendedName>
    <alternativeName>
        <fullName evidence="1">PCA reductase</fullName>
    </alternativeName>
</protein>
<proteinExistence type="inferred from homology"/>
<dbReference type="EC" id="1.5.1.2" evidence="1"/>
<dbReference type="EMBL" id="AF305580">
    <property type="protein sequence ID" value="AAG22033.1"/>
    <property type="molecule type" value="Genomic_DNA"/>
</dbReference>
<dbReference type="EMBL" id="AE010299">
    <property type="protein sequence ID" value="AAM07450.1"/>
    <property type="molecule type" value="Genomic_DNA"/>
</dbReference>
<dbReference type="RefSeq" id="WP_011023994.1">
    <property type="nucleotide sequence ID" value="NC_003552.1"/>
</dbReference>
<dbReference type="SMR" id="Q9HH99"/>
<dbReference type="STRING" id="188937.MA_4102"/>
<dbReference type="EnsemblBacteria" id="AAM07450">
    <property type="protein sequence ID" value="AAM07450"/>
    <property type="gene ID" value="MA_4102"/>
</dbReference>
<dbReference type="GeneID" id="1475996"/>
<dbReference type="KEGG" id="mac:MA_4102"/>
<dbReference type="HOGENOM" id="CLU_042344_3_1_2"/>
<dbReference type="InParanoid" id="Q9HH99"/>
<dbReference type="OrthoDB" id="25257at2157"/>
<dbReference type="PhylomeDB" id="Q9HH99"/>
<dbReference type="UniPathway" id="UPA00098">
    <property type="reaction ID" value="UER00361"/>
</dbReference>
<dbReference type="Proteomes" id="UP000002487">
    <property type="component" value="Chromosome"/>
</dbReference>
<dbReference type="GO" id="GO:0005737">
    <property type="term" value="C:cytoplasm"/>
    <property type="evidence" value="ECO:0007669"/>
    <property type="project" value="UniProtKB-SubCell"/>
</dbReference>
<dbReference type="GO" id="GO:0004735">
    <property type="term" value="F:pyrroline-5-carboxylate reductase activity"/>
    <property type="evidence" value="ECO:0000318"/>
    <property type="project" value="GO_Central"/>
</dbReference>
<dbReference type="GO" id="GO:0055129">
    <property type="term" value="P:L-proline biosynthetic process"/>
    <property type="evidence" value="ECO:0000318"/>
    <property type="project" value="GO_Central"/>
</dbReference>
<dbReference type="FunFam" id="1.10.3730.10:FF:000001">
    <property type="entry name" value="Pyrroline-5-carboxylate reductase"/>
    <property type="match status" value="1"/>
</dbReference>
<dbReference type="FunFam" id="3.40.50.720:FF:000105">
    <property type="entry name" value="Pyrroline-5-carboxylate reductase"/>
    <property type="match status" value="1"/>
</dbReference>
<dbReference type="Gene3D" id="3.40.50.720">
    <property type="entry name" value="NAD(P)-binding Rossmann-like Domain"/>
    <property type="match status" value="1"/>
</dbReference>
<dbReference type="Gene3D" id="1.10.3730.10">
    <property type="entry name" value="ProC C-terminal domain-like"/>
    <property type="match status" value="1"/>
</dbReference>
<dbReference type="HAMAP" id="MF_01925">
    <property type="entry name" value="P5C_reductase"/>
    <property type="match status" value="1"/>
</dbReference>
<dbReference type="InterPro" id="IPR008927">
    <property type="entry name" value="6-PGluconate_DH-like_C_sf"/>
</dbReference>
<dbReference type="InterPro" id="IPR036291">
    <property type="entry name" value="NAD(P)-bd_dom_sf"/>
</dbReference>
<dbReference type="InterPro" id="IPR028939">
    <property type="entry name" value="P5C_Rdtase_cat_N"/>
</dbReference>
<dbReference type="InterPro" id="IPR053790">
    <property type="entry name" value="P5CR-like_CS"/>
</dbReference>
<dbReference type="InterPro" id="IPR029036">
    <property type="entry name" value="P5CR_dimer"/>
</dbReference>
<dbReference type="InterPro" id="IPR000304">
    <property type="entry name" value="Pyrroline-COOH_reductase"/>
</dbReference>
<dbReference type="NCBIfam" id="TIGR00112">
    <property type="entry name" value="proC"/>
    <property type="match status" value="1"/>
</dbReference>
<dbReference type="PANTHER" id="PTHR11645">
    <property type="entry name" value="PYRROLINE-5-CARBOXYLATE REDUCTASE"/>
    <property type="match status" value="1"/>
</dbReference>
<dbReference type="PANTHER" id="PTHR11645:SF0">
    <property type="entry name" value="PYRROLINE-5-CARBOXYLATE REDUCTASE 3"/>
    <property type="match status" value="1"/>
</dbReference>
<dbReference type="Pfam" id="PF03807">
    <property type="entry name" value="F420_oxidored"/>
    <property type="match status" value="1"/>
</dbReference>
<dbReference type="Pfam" id="PF14748">
    <property type="entry name" value="P5CR_dimer"/>
    <property type="match status" value="1"/>
</dbReference>
<dbReference type="PIRSF" id="PIRSF000193">
    <property type="entry name" value="Pyrrol-5-carb_rd"/>
    <property type="match status" value="1"/>
</dbReference>
<dbReference type="SUPFAM" id="SSF48179">
    <property type="entry name" value="6-phosphogluconate dehydrogenase C-terminal domain-like"/>
    <property type="match status" value="1"/>
</dbReference>
<dbReference type="SUPFAM" id="SSF51735">
    <property type="entry name" value="NAD(P)-binding Rossmann-fold domains"/>
    <property type="match status" value="1"/>
</dbReference>
<dbReference type="PROSITE" id="PS00521">
    <property type="entry name" value="P5CR"/>
    <property type="match status" value="1"/>
</dbReference>
<feature type="chain" id="PRO_0000187312" description="Pyrroline-5-carboxylate reductase">
    <location>
        <begin position="1"/>
        <end position="270"/>
    </location>
</feature>
<organism>
    <name type="scientific">Methanosarcina acetivorans (strain ATCC 35395 / DSM 2834 / JCM 12185 / C2A)</name>
    <dbReference type="NCBI Taxonomy" id="188937"/>
    <lineage>
        <taxon>Archaea</taxon>
        <taxon>Methanobacteriati</taxon>
        <taxon>Methanobacteriota</taxon>
        <taxon>Stenosarchaea group</taxon>
        <taxon>Methanomicrobia</taxon>
        <taxon>Methanosarcinales</taxon>
        <taxon>Methanosarcinaceae</taxon>
        <taxon>Methanosarcina</taxon>
    </lineage>
</organism>
<gene>
    <name evidence="1" type="primary">proC</name>
    <name type="ordered locus">MA_4102</name>
</gene>
<evidence type="ECO:0000255" key="1">
    <source>
        <dbReference type="HAMAP-Rule" id="MF_01925"/>
    </source>
</evidence>
<evidence type="ECO:0000269" key="2">
    <source>
    </source>
</evidence>
<evidence type="ECO:0000305" key="3">
    <source>
    </source>
</evidence>
<keyword id="KW-0028">Amino-acid biosynthesis</keyword>
<keyword id="KW-0963">Cytoplasm</keyword>
<keyword id="KW-0521">NADP</keyword>
<keyword id="KW-0560">Oxidoreductase</keyword>
<keyword id="KW-0641">Proline biosynthesis</keyword>
<keyword id="KW-1185">Reference proteome</keyword>
<sequence>MENQKIGFIGAGKMGSALMQGTIKAGIVTPENIGASDVYEPFLKDLQAKLGIRVSTDNAVIVRESDILILAVKPQTLSSVLSNLKNEITSEKLVISIAAGVPLSTYEDALLEGTRVVRVMPNIAATVSEAASGIAPGKNATPEDLKAALEIFSAVGTAVQVPESLMDAVTGLSGSGPAFIFPVIEAMADGAVLEGMDRKSALTLAAQTVLGAAKMALETGMHPGELKDMVTSPAGTTIQGIHSLEEAGIRAAFMNAVIRASERSKELGKK</sequence>
<reference key="1">
    <citation type="journal article" date="2002" name="J. Bacteriol.">
        <title>Directed mutagenesis and plasmid-based complementation in the methanogenic archaeon Methanosarcina acetivorans C2A demonstrated by genetic analysis of proline biosynthesis.</title>
        <authorList>
            <person name="Zhang J.K."/>
            <person name="White A.K."/>
            <person name="Kuettner H.C."/>
            <person name="Boccazzi P."/>
            <person name="Metcalf W.W."/>
        </authorList>
    </citation>
    <scope>NUCLEOTIDE SEQUENCE [GENOMIC DNA]</scope>
    <scope>FUNCTION</scope>
    <scope>PATHWAY</scope>
    <scope>DISRUPTION PHENOTYPE</scope>
    <source>
        <strain>ATCC 35395 / DSM 2834 / JCM 12185 / C2A</strain>
    </source>
</reference>
<reference key="2">
    <citation type="journal article" date="2002" name="Genome Res.">
        <title>The genome of Methanosarcina acetivorans reveals extensive metabolic and physiological diversity.</title>
        <authorList>
            <person name="Galagan J.E."/>
            <person name="Nusbaum C."/>
            <person name="Roy A."/>
            <person name="Endrizzi M.G."/>
            <person name="Macdonald P."/>
            <person name="FitzHugh W."/>
            <person name="Calvo S."/>
            <person name="Engels R."/>
            <person name="Smirnov S."/>
            <person name="Atnoor D."/>
            <person name="Brown A."/>
            <person name="Allen N."/>
            <person name="Naylor J."/>
            <person name="Stange-Thomann N."/>
            <person name="DeArellano K."/>
            <person name="Johnson R."/>
            <person name="Linton L."/>
            <person name="McEwan P."/>
            <person name="McKernan K."/>
            <person name="Talamas J."/>
            <person name="Tirrell A."/>
            <person name="Ye W."/>
            <person name="Zimmer A."/>
            <person name="Barber R.D."/>
            <person name="Cann I."/>
            <person name="Graham D.E."/>
            <person name="Grahame D.A."/>
            <person name="Guss A.M."/>
            <person name="Hedderich R."/>
            <person name="Ingram-Smith C."/>
            <person name="Kuettner H.C."/>
            <person name="Krzycki J.A."/>
            <person name="Leigh J.A."/>
            <person name="Li W."/>
            <person name="Liu J."/>
            <person name="Mukhopadhyay B."/>
            <person name="Reeve J.N."/>
            <person name="Smith K."/>
            <person name="Springer T.A."/>
            <person name="Umayam L.A."/>
            <person name="White O."/>
            <person name="White R.H."/>
            <person name="de Macario E.C."/>
            <person name="Ferry J.G."/>
            <person name="Jarrell K.F."/>
            <person name="Jing H."/>
            <person name="Macario A.J.L."/>
            <person name="Paulsen I.T."/>
            <person name="Pritchett M."/>
            <person name="Sowers K.R."/>
            <person name="Swanson R.V."/>
            <person name="Zinder S.H."/>
            <person name="Lander E."/>
            <person name="Metcalf W.W."/>
            <person name="Birren B."/>
        </authorList>
    </citation>
    <scope>NUCLEOTIDE SEQUENCE [LARGE SCALE GENOMIC DNA]</scope>
    <source>
        <strain>ATCC 35395 / DSM 2834 / JCM 12185 / C2A</strain>
    </source>
</reference>
<name>P5CR_METAC</name>